<feature type="chain" id="PRO_0000230478" description="Small ribosomal subunit protein uS13">
    <location>
        <begin position="1"/>
        <end position="121"/>
    </location>
</feature>
<feature type="region of interest" description="Disordered" evidence="2">
    <location>
        <begin position="92"/>
        <end position="121"/>
    </location>
</feature>
<evidence type="ECO:0000255" key="1">
    <source>
        <dbReference type="HAMAP-Rule" id="MF_01315"/>
    </source>
</evidence>
<evidence type="ECO:0000256" key="2">
    <source>
        <dbReference type="SAM" id="MobiDB-lite"/>
    </source>
</evidence>
<evidence type="ECO:0000305" key="3"/>
<dbReference type="EMBL" id="BX640437">
    <property type="protein sequence ID" value="CAE30556.1"/>
    <property type="molecule type" value="Genomic_DNA"/>
</dbReference>
<dbReference type="RefSeq" id="WP_003806929.1">
    <property type="nucleotide sequence ID" value="NC_002927.3"/>
</dbReference>
<dbReference type="SMR" id="Q7WRA0"/>
<dbReference type="GeneID" id="93206284"/>
<dbReference type="KEGG" id="bbr:BB0054"/>
<dbReference type="eggNOG" id="COG0099">
    <property type="taxonomic scope" value="Bacteria"/>
</dbReference>
<dbReference type="HOGENOM" id="CLU_103849_1_2_4"/>
<dbReference type="Proteomes" id="UP000001027">
    <property type="component" value="Chromosome"/>
</dbReference>
<dbReference type="GO" id="GO:0005829">
    <property type="term" value="C:cytosol"/>
    <property type="evidence" value="ECO:0007669"/>
    <property type="project" value="TreeGrafter"/>
</dbReference>
<dbReference type="GO" id="GO:0015935">
    <property type="term" value="C:small ribosomal subunit"/>
    <property type="evidence" value="ECO:0007669"/>
    <property type="project" value="TreeGrafter"/>
</dbReference>
<dbReference type="GO" id="GO:0019843">
    <property type="term" value="F:rRNA binding"/>
    <property type="evidence" value="ECO:0007669"/>
    <property type="project" value="UniProtKB-UniRule"/>
</dbReference>
<dbReference type="GO" id="GO:0003735">
    <property type="term" value="F:structural constituent of ribosome"/>
    <property type="evidence" value="ECO:0007669"/>
    <property type="project" value="InterPro"/>
</dbReference>
<dbReference type="GO" id="GO:0000049">
    <property type="term" value="F:tRNA binding"/>
    <property type="evidence" value="ECO:0007669"/>
    <property type="project" value="UniProtKB-UniRule"/>
</dbReference>
<dbReference type="GO" id="GO:0006412">
    <property type="term" value="P:translation"/>
    <property type="evidence" value="ECO:0007669"/>
    <property type="project" value="UniProtKB-UniRule"/>
</dbReference>
<dbReference type="FunFam" id="1.10.8.50:FF:000001">
    <property type="entry name" value="30S ribosomal protein S13"/>
    <property type="match status" value="1"/>
</dbReference>
<dbReference type="FunFam" id="4.10.910.10:FF:000001">
    <property type="entry name" value="30S ribosomal protein S13"/>
    <property type="match status" value="1"/>
</dbReference>
<dbReference type="Gene3D" id="1.10.8.50">
    <property type="match status" value="1"/>
</dbReference>
<dbReference type="Gene3D" id="4.10.910.10">
    <property type="entry name" value="30s ribosomal protein s13, domain 2"/>
    <property type="match status" value="1"/>
</dbReference>
<dbReference type="HAMAP" id="MF_01315">
    <property type="entry name" value="Ribosomal_uS13"/>
    <property type="match status" value="1"/>
</dbReference>
<dbReference type="InterPro" id="IPR027437">
    <property type="entry name" value="Rbsml_uS13_C"/>
</dbReference>
<dbReference type="InterPro" id="IPR001892">
    <property type="entry name" value="Ribosomal_uS13"/>
</dbReference>
<dbReference type="InterPro" id="IPR010979">
    <property type="entry name" value="Ribosomal_uS13-like_H2TH"/>
</dbReference>
<dbReference type="InterPro" id="IPR019980">
    <property type="entry name" value="Ribosomal_uS13_bac-type"/>
</dbReference>
<dbReference type="InterPro" id="IPR018269">
    <property type="entry name" value="Ribosomal_uS13_CS"/>
</dbReference>
<dbReference type="NCBIfam" id="TIGR03631">
    <property type="entry name" value="uS13_bact"/>
    <property type="match status" value="1"/>
</dbReference>
<dbReference type="PANTHER" id="PTHR10871">
    <property type="entry name" value="30S RIBOSOMAL PROTEIN S13/40S RIBOSOMAL PROTEIN S18"/>
    <property type="match status" value="1"/>
</dbReference>
<dbReference type="PANTHER" id="PTHR10871:SF1">
    <property type="entry name" value="SMALL RIBOSOMAL SUBUNIT PROTEIN US13M"/>
    <property type="match status" value="1"/>
</dbReference>
<dbReference type="Pfam" id="PF00416">
    <property type="entry name" value="Ribosomal_S13"/>
    <property type="match status" value="2"/>
</dbReference>
<dbReference type="PIRSF" id="PIRSF002134">
    <property type="entry name" value="Ribosomal_S13"/>
    <property type="match status" value="1"/>
</dbReference>
<dbReference type="SUPFAM" id="SSF46946">
    <property type="entry name" value="S13-like H2TH domain"/>
    <property type="match status" value="1"/>
</dbReference>
<dbReference type="PROSITE" id="PS00646">
    <property type="entry name" value="RIBOSOMAL_S13_1"/>
    <property type="match status" value="1"/>
</dbReference>
<dbReference type="PROSITE" id="PS50159">
    <property type="entry name" value="RIBOSOMAL_S13_2"/>
    <property type="match status" value="1"/>
</dbReference>
<reference key="1">
    <citation type="journal article" date="2003" name="Nat. Genet.">
        <title>Comparative analysis of the genome sequences of Bordetella pertussis, Bordetella parapertussis and Bordetella bronchiseptica.</title>
        <authorList>
            <person name="Parkhill J."/>
            <person name="Sebaihia M."/>
            <person name="Preston A."/>
            <person name="Murphy L.D."/>
            <person name="Thomson N.R."/>
            <person name="Harris D.E."/>
            <person name="Holden M.T.G."/>
            <person name="Churcher C.M."/>
            <person name="Bentley S.D."/>
            <person name="Mungall K.L."/>
            <person name="Cerdeno-Tarraga A.-M."/>
            <person name="Temple L."/>
            <person name="James K.D."/>
            <person name="Harris B."/>
            <person name="Quail M.A."/>
            <person name="Achtman M."/>
            <person name="Atkin R."/>
            <person name="Baker S."/>
            <person name="Basham D."/>
            <person name="Bason N."/>
            <person name="Cherevach I."/>
            <person name="Chillingworth T."/>
            <person name="Collins M."/>
            <person name="Cronin A."/>
            <person name="Davis P."/>
            <person name="Doggett J."/>
            <person name="Feltwell T."/>
            <person name="Goble A."/>
            <person name="Hamlin N."/>
            <person name="Hauser H."/>
            <person name="Holroyd S."/>
            <person name="Jagels K."/>
            <person name="Leather S."/>
            <person name="Moule S."/>
            <person name="Norberczak H."/>
            <person name="O'Neil S."/>
            <person name="Ormond D."/>
            <person name="Price C."/>
            <person name="Rabbinowitsch E."/>
            <person name="Rutter S."/>
            <person name="Sanders M."/>
            <person name="Saunders D."/>
            <person name="Seeger K."/>
            <person name="Sharp S."/>
            <person name="Simmonds M."/>
            <person name="Skelton J."/>
            <person name="Squares R."/>
            <person name="Squares S."/>
            <person name="Stevens K."/>
            <person name="Unwin L."/>
            <person name="Whitehead S."/>
            <person name="Barrell B.G."/>
            <person name="Maskell D.J."/>
        </authorList>
    </citation>
    <scope>NUCLEOTIDE SEQUENCE [LARGE SCALE GENOMIC DNA]</scope>
    <source>
        <strain>ATCC BAA-588 / NCTC 13252 / RB50</strain>
    </source>
</reference>
<protein>
    <recommendedName>
        <fullName evidence="1">Small ribosomal subunit protein uS13</fullName>
    </recommendedName>
    <alternativeName>
        <fullName evidence="3">30S ribosomal protein S13</fullName>
    </alternativeName>
</protein>
<accession>Q7WRA0</accession>
<keyword id="KW-0687">Ribonucleoprotein</keyword>
<keyword id="KW-0689">Ribosomal protein</keyword>
<keyword id="KW-0694">RNA-binding</keyword>
<keyword id="KW-0699">rRNA-binding</keyword>
<keyword id="KW-0820">tRNA-binding</keyword>
<proteinExistence type="inferred from homology"/>
<organism>
    <name type="scientific">Bordetella bronchiseptica (strain ATCC BAA-588 / NCTC 13252 / RB50)</name>
    <name type="common">Alcaligenes bronchisepticus</name>
    <dbReference type="NCBI Taxonomy" id="257310"/>
    <lineage>
        <taxon>Bacteria</taxon>
        <taxon>Pseudomonadati</taxon>
        <taxon>Pseudomonadota</taxon>
        <taxon>Betaproteobacteria</taxon>
        <taxon>Burkholderiales</taxon>
        <taxon>Alcaligenaceae</taxon>
        <taxon>Bordetella</taxon>
    </lineage>
</organism>
<gene>
    <name evidence="1" type="primary">rpsM</name>
    <name type="ordered locus">BB0054</name>
</gene>
<comment type="function">
    <text evidence="1">Located at the top of the head of the 30S subunit, it contacts several helices of the 16S rRNA. In the 70S ribosome it contacts the 23S rRNA (bridge B1a) and protein L5 of the 50S subunit (bridge B1b), connecting the 2 subunits; these bridges are implicated in subunit movement. Contacts the tRNAs in the A and P-sites.</text>
</comment>
<comment type="subunit">
    <text evidence="1">Part of the 30S ribosomal subunit. Forms a loose heterodimer with protein S19. Forms two bridges to the 50S subunit in the 70S ribosome.</text>
</comment>
<comment type="similarity">
    <text evidence="1">Belongs to the universal ribosomal protein uS13 family.</text>
</comment>
<sequence>MARIAGINIPPQQHAEIGLTAIFGIGRTRARKICEAAGVPVTKKVKDLTDAELERIREHIGVFAVEGDLRREVQLSIKRLIDLGTYRGMRHKRGLPVRGQRTRTNARTRKGPRRAAASLKK</sequence>
<name>RS13_BORBR</name>